<keyword id="KW-0030">Aminoacyl-tRNA synthetase</keyword>
<keyword id="KW-0067">ATP-binding</keyword>
<keyword id="KW-0963">Cytoplasm</keyword>
<keyword id="KW-0436">Ligase</keyword>
<keyword id="KW-0547">Nucleotide-binding</keyword>
<keyword id="KW-0648">Protein biosynthesis</keyword>
<evidence type="ECO:0000255" key="1">
    <source>
        <dbReference type="HAMAP-Rule" id="MF_00044"/>
    </source>
</evidence>
<dbReference type="EC" id="6.1.1.12" evidence="1"/>
<dbReference type="EMBL" id="CP001113">
    <property type="protein sequence ID" value="ACF61674.1"/>
    <property type="molecule type" value="Genomic_DNA"/>
</dbReference>
<dbReference type="RefSeq" id="WP_001258633.1">
    <property type="nucleotide sequence ID" value="NZ_CCMR01000003.1"/>
</dbReference>
<dbReference type="SMR" id="B4SVF1"/>
<dbReference type="KEGG" id="see:SNSL254_A2060"/>
<dbReference type="HOGENOM" id="CLU_014330_3_2_6"/>
<dbReference type="Proteomes" id="UP000008824">
    <property type="component" value="Chromosome"/>
</dbReference>
<dbReference type="GO" id="GO:0005737">
    <property type="term" value="C:cytoplasm"/>
    <property type="evidence" value="ECO:0007669"/>
    <property type="project" value="UniProtKB-SubCell"/>
</dbReference>
<dbReference type="GO" id="GO:0004815">
    <property type="term" value="F:aspartate-tRNA ligase activity"/>
    <property type="evidence" value="ECO:0007669"/>
    <property type="project" value="UniProtKB-UniRule"/>
</dbReference>
<dbReference type="GO" id="GO:0005524">
    <property type="term" value="F:ATP binding"/>
    <property type="evidence" value="ECO:0007669"/>
    <property type="project" value="UniProtKB-UniRule"/>
</dbReference>
<dbReference type="GO" id="GO:0003676">
    <property type="term" value="F:nucleic acid binding"/>
    <property type="evidence" value="ECO:0007669"/>
    <property type="project" value="InterPro"/>
</dbReference>
<dbReference type="GO" id="GO:0006422">
    <property type="term" value="P:aspartyl-tRNA aminoacylation"/>
    <property type="evidence" value="ECO:0007669"/>
    <property type="project" value="UniProtKB-UniRule"/>
</dbReference>
<dbReference type="CDD" id="cd00777">
    <property type="entry name" value="AspRS_core"/>
    <property type="match status" value="1"/>
</dbReference>
<dbReference type="CDD" id="cd04317">
    <property type="entry name" value="EcAspRS_like_N"/>
    <property type="match status" value="1"/>
</dbReference>
<dbReference type="FunFam" id="2.40.50.140:FF:000080">
    <property type="entry name" value="Aspartate--tRNA ligase"/>
    <property type="match status" value="1"/>
</dbReference>
<dbReference type="FunFam" id="3.30.1360.30:FF:000001">
    <property type="entry name" value="Aspartate--tRNA ligase"/>
    <property type="match status" value="1"/>
</dbReference>
<dbReference type="Gene3D" id="3.30.930.10">
    <property type="entry name" value="Bira Bifunctional Protein, Domain 2"/>
    <property type="match status" value="1"/>
</dbReference>
<dbReference type="Gene3D" id="3.30.1360.30">
    <property type="entry name" value="GAD-like domain"/>
    <property type="match status" value="1"/>
</dbReference>
<dbReference type="Gene3D" id="2.40.50.140">
    <property type="entry name" value="Nucleic acid-binding proteins"/>
    <property type="match status" value="1"/>
</dbReference>
<dbReference type="HAMAP" id="MF_00044">
    <property type="entry name" value="Asp_tRNA_synth_type1"/>
    <property type="match status" value="1"/>
</dbReference>
<dbReference type="InterPro" id="IPR004364">
    <property type="entry name" value="Aa-tRNA-synt_II"/>
</dbReference>
<dbReference type="InterPro" id="IPR006195">
    <property type="entry name" value="aa-tRNA-synth_II"/>
</dbReference>
<dbReference type="InterPro" id="IPR045864">
    <property type="entry name" value="aa-tRNA-synth_II/BPL/LPL"/>
</dbReference>
<dbReference type="InterPro" id="IPR004524">
    <property type="entry name" value="Asp-tRNA-ligase_1"/>
</dbReference>
<dbReference type="InterPro" id="IPR047089">
    <property type="entry name" value="Asp-tRNA-ligase_1_N"/>
</dbReference>
<dbReference type="InterPro" id="IPR002312">
    <property type="entry name" value="Asp/Asn-tRNA-synth_IIb"/>
</dbReference>
<dbReference type="InterPro" id="IPR047090">
    <property type="entry name" value="AspRS_core"/>
</dbReference>
<dbReference type="InterPro" id="IPR004115">
    <property type="entry name" value="GAD-like_sf"/>
</dbReference>
<dbReference type="InterPro" id="IPR029351">
    <property type="entry name" value="GAD_dom"/>
</dbReference>
<dbReference type="InterPro" id="IPR012340">
    <property type="entry name" value="NA-bd_OB-fold"/>
</dbReference>
<dbReference type="InterPro" id="IPR004365">
    <property type="entry name" value="NA-bd_OB_tRNA"/>
</dbReference>
<dbReference type="NCBIfam" id="TIGR00459">
    <property type="entry name" value="aspS_bact"/>
    <property type="match status" value="1"/>
</dbReference>
<dbReference type="NCBIfam" id="NF001750">
    <property type="entry name" value="PRK00476.1"/>
    <property type="match status" value="1"/>
</dbReference>
<dbReference type="PANTHER" id="PTHR22594:SF5">
    <property type="entry name" value="ASPARTATE--TRNA LIGASE, MITOCHONDRIAL"/>
    <property type="match status" value="1"/>
</dbReference>
<dbReference type="PANTHER" id="PTHR22594">
    <property type="entry name" value="ASPARTYL/LYSYL-TRNA SYNTHETASE"/>
    <property type="match status" value="1"/>
</dbReference>
<dbReference type="Pfam" id="PF02938">
    <property type="entry name" value="GAD"/>
    <property type="match status" value="1"/>
</dbReference>
<dbReference type="Pfam" id="PF00152">
    <property type="entry name" value="tRNA-synt_2"/>
    <property type="match status" value="1"/>
</dbReference>
<dbReference type="Pfam" id="PF01336">
    <property type="entry name" value="tRNA_anti-codon"/>
    <property type="match status" value="1"/>
</dbReference>
<dbReference type="PRINTS" id="PR01042">
    <property type="entry name" value="TRNASYNTHASP"/>
</dbReference>
<dbReference type="SUPFAM" id="SSF55681">
    <property type="entry name" value="Class II aaRS and biotin synthetases"/>
    <property type="match status" value="1"/>
</dbReference>
<dbReference type="SUPFAM" id="SSF55261">
    <property type="entry name" value="GAD domain-like"/>
    <property type="match status" value="1"/>
</dbReference>
<dbReference type="SUPFAM" id="SSF50249">
    <property type="entry name" value="Nucleic acid-binding proteins"/>
    <property type="match status" value="1"/>
</dbReference>
<dbReference type="PROSITE" id="PS50862">
    <property type="entry name" value="AA_TRNA_LIGASE_II"/>
    <property type="match status" value="1"/>
</dbReference>
<protein>
    <recommendedName>
        <fullName evidence="1">Aspartate--tRNA ligase</fullName>
        <ecNumber evidence="1">6.1.1.12</ecNumber>
    </recommendedName>
    <alternativeName>
        <fullName evidence="1">Aspartyl-tRNA synthetase</fullName>
        <shortName evidence="1">AspRS</shortName>
    </alternativeName>
</protein>
<accession>B4SVF1</accession>
<proteinExistence type="inferred from homology"/>
<gene>
    <name evidence="1" type="primary">aspS</name>
    <name type="ordered locus">SNSL254_A2060</name>
</gene>
<organism>
    <name type="scientific">Salmonella newport (strain SL254)</name>
    <dbReference type="NCBI Taxonomy" id="423368"/>
    <lineage>
        <taxon>Bacteria</taxon>
        <taxon>Pseudomonadati</taxon>
        <taxon>Pseudomonadota</taxon>
        <taxon>Gammaproteobacteria</taxon>
        <taxon>Enterobacterales</taxon>
        <taxon>Enterobacteriaceae</taxon>
        <taxon>Salmonella</taxon>
    </lineage>
</organism>
<sequence length="590" mass="65767">MRTEYCGQLRLSHVGQQVTLCGWVNRRRDLGSLIFIDMRDREGIVQVFFDPDRADALKLASELRNEFCIQVTGTVRARDAKNVNADMATGEIEVLASSLTIINRADSLPLDANHVNTEEARLKYRYLDLRRPEMAQRLKTRAKITSLVRRFMDDHGFLDIETPMLTKATPEGARDYLVPSRVHKGKFYALPQSPQLFKQLLMMSGFDRYYQIVKCFRDEDLRADRQPEFTQIDVETSFMTAPQVREVMEALVRHLWLEVKGVDLGDFPVMTFAEAERRYGSDKPDLRNPMELVDVADLLKSVEFAVFAGPANDPKGRVAALRVPGGAQLSRKQIDDYGNFVKIYGAKGLAYIKVNERAKGLDGINSPVAKFLTADIVEAILERTGAQDGDMIFFGADNKKVVADALGALRLKLGKDLSLTDEDKWAPLWVIDFPMFEDDGEGGLTAMHHPFTAPRDMTASELKTAPEEAVANAYDMVINGYEVGGGSVRIHNGEMQQTVFGILGINEQEQREKFGFLLDALKYGTPPHAGLAFGLDRLTMLLTGTDNIRDVIAFPKTTAAACLMTEAPSFANQAALTELGIQVVKKAENN</sequence>
<name>SYD_SALNS</name>
<comment type="function">
    <text evidence="1">Catalyzes the attachment of L-aspartate to tRNA(Asp) in a two-step reaction: L-aspartate is first activated by ATP to form Asp-AMP and then transferred to the acceptor end of tRNA(Asp).</text>
</comment>
<comment type="catalytic activity">
    <reaction evidence="1">
        <text>tRNA(Asp) + L-aspartate + ATP = L-aspartyl-tRNA(Asp) + AMP + diphosphate</text>
        <dbReference type="Rhea" id="RHEA:19649"/>
        <dbReference type="Rhea" id="RHEA-COMP:9660"/>
        <dbReference type="Rhea" id="RHEA-COMP:9678"/>
        <dbReference type="ChEBI" id="CHEBI:29991"/>
        <dbReference type="ChEBI" id="CHEBI:30616"/>
        <dbReference type="ChEBI" id="CHEBI:33019"/>
        <dbReference type="ChEBI" id="CHEBI:78442"/>
        <dbReference type="ChEBI" id="CHEBI:78516"/>
        <dbReference type="ChEBI" id="CHEBI:456215"/>
        <dbReference type="EC" id="6.1.1.12"/>
    </reaction>
</comment>
<comment type="subunit">
    <text evidence="1">Homodimer.</text>
</comment>
<comment type="subcellular location">
    <subcellularLocation>
        <location evidence="1">Cytoplasm</location>
    </subcellularLocation>
</comment>
<comment type="similarity">
    <text evidence="1">Belongs to the class-II aminoacyl-tRNA synthetase family. Type 1 subfamily.</text>
</comment>
<feature type="chain" id="PRO_1000091040" description="Aspartate--tRNA ligase">
    <location>
        <begin position="1"/>
        <end position="590"/>
    </location>
</feature>
<feature type="region of interest" description="Aspartate" evidence="1">
    <location>
        <begin position="195"/>
        <end position="198"/>
    </location>
</feature>
<feature type="binding site" evidence="1">
    <location>
        <position position="171"/>
    </location>
    <ligand>
        <name>L-aspartate</name>
        <dbReference type="ChEBI" id="CHEBI:29991"/>
    </ligand>
</feature>
<feature type="binding site" evidence="1">
    <location>
        <begin position="217"/>
        <end position="219"/>
    </location>
    <ligand>
        <name>ATP</name>
        <dbReference type="ChEBI" id="CHEBI:30616"/>
    </ligand>
</feature>
<feature type="binding site" evidence="1">
    <location>
        <position position="217"/>
    </location>
    <ligand>
        <name>L-aspartate</name>
        <dbReference type="ChEBI" id="CHEBI:29991"/>
    </ligand>
</feature>
<feature type="binding site" evidence="1">
    <location>
        <position position="226"/>
    </location>
    <ligand>
        <name>ATP</name>
        <dbReference type="ChEBI" id="CHEBI:30616"/>
    </ligand>
</feature>
<feature type="binding site" evidence="1">
    <location>
        <position position="448"/>
    </location>
    <ligand>
        <name>L-aspartate</name>
        <dbReference type="ChEBI" id="CHEBI:29991"/>
    </ligand>
</feature>
<feature type="binding site" evidence="1">
    <location>
        <position position="482"/>
    </location>
    <ligand>
        <name>ATP</name>
        <dbReference type="ChEBI" id="CHEBI:30616"/>
    </ligand>
</feature>
<feature type="binding site" evidence="1">
    <location>
        <position position="489"/>
    </location>
    <ligand>
        <name>L-aspartate</name>
        <dbReference type="ChEBI" id="CHEBI:29991"/>
    </ligand>
</feature>
<feature type="binding site" evidence="1">
    <location>
        <begin position="534"/>
        <end position="537"/>
    </location>
    <ligand>
        <name>ATP</name>
        <dbReference type="ChEBI" id="CHEBI:30616"/>
    </ligand>
</feature>
<reference key="1">
    <citation type="journal article" date="2011" name="J. Bacteriol.">
        <title>Comparative genomics of 28 Salmonella enterica isolates: evidence for CRISPR-mediated adaptive sublineage evolution.</title>
        <authorList>
            <person name="Fricke W.F."/>
            <person name="Mammel M.K."/>
            <person name="McDermott P.F."/>
            <person name="Tartera C."/>
            <person name="White D.G."/>
            <person name="Leclerc J.E."/>
            <person name="Ravel J."/>
            <person name="Cebula T.A."/>
        </authorList>
    </citation>
    <scope>NUCLEOTIDE SEQUENCE [LARGE SCALE GENOMIC DNA]</scope>
    <source>
        <strain>SL254</strain>
    </source>
</reference>